<gene>
    <name evidence="1" type="primary">msrA</name>
    <name type="ordered locus">ECUMN_4755</name>
</gene>
<evidence type="ECO:0000255" key="1">
    <source>
        <dbReference type="HAMAP-Rule" id="MF_01401"/>
    </source>
</evidence>
<name>MSRA_ECOLU</name>
<keyword id="KW-0560">Oxidoreductase</keyword>
<organism>
    <name type="scientific">Escherichia coli O17:K52:H18 (strain UMN026 / ExPEC)</name>
    <dbReference type="NCBI Taxonomy" id="585056"/>
    <lineage>
        <taxon>Bacteria</taxon>
        <taxon>Pseudomonadati</taxon>
        <taxon>Pseudomonadota</taxon>
        <taxon>Gammaproteobacteria</taxon>
        <taxon>Enterobacterales</taxon>
        <taxon>Enterobacteriaceae</taxon>
        <taxon>Escherichia</taxon>
    </lineage>
</organism>
<protein>
    <recommendedName>
        <fullName evidence="1">Peptide methionine sulfoxide reductase MsrA</fullName>
        <shortName evidence="1">Protein-methionine-S-oxide reductase</shortName>
        <ecNumber evidence="1">1.8.4.11</ecNumber>
    </recommendedName>
    <alternativeName>
        <fullName evidence="1">Peptide-methionine (S)-S-oxide reductase</fullName>
        <shortName evidence="1">Peptide Met(O) reductase</shortName>
    </alternativeName>
</protein>
<dbReference type="EC" id="1.8.4.11" evidence="1"/>
<dbReference type="EMBL" id="CU928163">
    <property type="protein sequence ID" value="CAR15868.1"/>
    <property type="molecule type" value="Genomic_DNA"/>
</dbReference>
<dbReference type="RefSeq" id="WP_001305659.1">
    <property type="nucleotide sequence ID" value="NC_011751.1"/>
</dbReference>
<dbReference type="RefSeq" id="YP_002415351.1">
    <property type="nucleotide sequence ID" value="NC_011751.1"/>
</dbReference>
<dbReference type="SMR" id="B7NGF6"/>
<dbReference type="STRING" id="585056.ECUMN_4755"/>
<dbReference type="KEGG" id="eum:ECUMN_4755"/>
<dbReference type="PATRIC" id="fig|585056.7.peg.4919"/>
<dbReference type="HOGENOM" id="CLU_031040_10_3_6"/>
<dbReference type="Proteomes" id="UP000007097">
    <property type="component" value="Chromosome"/>
</dbReference>
<dbReference type="GO" id="GO:0005737">
    <property type="term" value="C:cytoplasm"/>
    <property type="evidence" value="ECO:0007669"/>
    <property type="project" value="TreeGrafter"/>
</dbReference>
<dbReference type="GO" id="GO:0036456">
    <property type="term" value="F:L-methionine-(S)-S-oxide reductase activity"/>
    <property type="evidence" value="ECO:0007669"/>
    <property type="project" value="TreeGrafter"/>
</dbReference>
<dbReference type="GO" id="GO:0008113">
    <property type="term" value="F:peptide-methionine (S)-S-oxide reductase activity"/>
    <property type="evidence" value="ECO:0007669"/>
    <property type="project" value="UniProtKB-UniRule"/>
</dbReference>
<dbReference type="GO" id="GO:0034599">
    <property type="term" value="P:cellular response to oxidative stress"/>
    <property type="evidence" value="ECO:0007669"/>
    <property type="project" value="TreeGrafter"/>
</dbReference>
<dbReference type="GO" id="GO:0036211">
    <property type="term" value="P:protein modification process"/>
    <property type="evidence" value="ECO:0007669"/>
    <property type="project" value="UniProtKB-UniRule"/>
</dbReference>
<dbReference type="FunFam" id="3.30.1060.10:FF:000001">
    <property type="entry name" value="Peptide methionine sulfoxide reductase MsrA"/>
    <property type="match status" value="1"/>
</dbReference>
<dbReference type="Gene3D" id="3.30.1060.10">
    <property type="entry name" value="Peptide methionine sulphoxide reductase MsrA"/>
    <property type="match status" value="1"/>
</dbReference>
<dbReference type="HAMAP" id="MF_01401">
    <property type="entry name" value="MsrA"/>
    <property type="match status" value="1"/>
</dbReference>
<dbReference type="InterPro" id="IPR002569">
    <property type="entry name" value="Met_Sox_Rdtase_MsrA_dom"/>
</dbReference>
<dbReference type="InterPro" id="IPR036509">
    <property type="entry name" value="Met_Sox_Rdtase_MsrA_sf"/>
</dbReference>
<dbReference type="InterPro" id="IPR050162">
    <property type="entry name" value="MsrA_MetSO_reductase"/>
</dbReference>
<dbReference type="NCBIfam" id="TIGR00401">
    <property type="entry name" value="msrA"/>
    <property type="match status" value="1"/>
</dbReference>
<dbReference type="PANTHER" id="PTHR42799">
    <property type="entry name" value="MITOCHONDRIAL PEPTIDE METHIONINE SULFOXIDE REDUCTASE"/>
    <property type="match status" value="1"/>
</dbReference>
<dbReference type="PANTHER" id="PTHR42799:SF2">
    <property type="entry name" value="MITOCHONDRIAL PEPTIDE METHIONINE SULFOXIDE REDUCTASE"/>
    <property type="match status" value="1"/>
</dbReference>
<dbReference type="Pfam" id="PF01625">
    <property type="entry name" value="PMSR"/>
    <property type="match status" value="1"/>
</dbReference>
<dbReference type="SUPFAM" id="SSF55068">
    <property type="entry name" value="Peptide methionine sulfoxide reductase"/>
    <property type="match status" value="1"/>
</dbReference>
<sequence>MSLFDKKHLVSPADALPGRNTPMPVATLHAVNGHSMTNVPDGMEIAIFAMGCFWGVERLFWQLPGVYSTAAGYTGGYTPNPTYREVCSGDTGHAEAVRIVYDPSVISYEQLLQVFWENHDPAQGMRQGNDHGTQYRSAIYPLTPEQDAAARASLERFQAAMLAADDDRRITTEIANATPFYYAEDDHQQYLHKNPYGYCGIGGIGVCLPPEA</sequence>
<reference key="1">
    <citation type="journal article" date="2009" name="PLoS Genet.">
        <title>Organised genome dynamics in the Escherichia coli species results in highly diverse adaptive paths.</title>
        <authorList>
            <person name="Touchon M."/>
            <person name="Hoede C."/>
            <person name="Tenaillon O."/>
            <person name="Barbe V."/>
            <person name="Baeriswyl S."/>
            <person name="Bidet P."/>
            <person name="Bingen E."/>
            <person name="Bonacorsi S."/>
            <person name="Bouchier C."/>
            <person name="Bouvet O."/>
            <person name="Calteau A."/>
            <person name="Chiapello H."/>
            <person name="Clermont O."/>
            <person name="Cruveiller S."/>
            <person name="Danchin A."/>
            <person name="Diard M."/>
            <person name="Dossat C."/>
            <person name="Karoui M.E."/>
            <person name="Frapy E."/>
            <person name="Garry L."/>
            <person name="Ghigo J.M."/>
            <person name="Gilles A.M."/>
            <person name="Johnson J."/>
            <person name="Le Bouguenec C."/>
            <person name="Lescat M."/>
            <person name="Mangenot S."/>
            <person name="Martinez-Jehanne V."/>
            <person name="Matic I."/>
            <person name="Nassif X."/>
            <person name="Oztas S."/>
            <person name="Petit M.A."/>
            <person name="Pichon C."/>
            <person name="Rouy Z."/>
            <person name="Ruf C.S."/>
            <person name="Schneider D."/>
            <person name="Tourret J."/>
            <person name="Vacherie B."/>
            <person name="Vallenet D."/>
            <person name="Medigue C."/>
            <person name="Rocha E.P.C."/>
            <person name="Denamur E."/>
        </authorList>
    </citation>
    <scope>NUCLEOTIDE SEQUENCE [LARGE SCALE GENOMIC DNA]</scope>
    <source>
        <strain>UMN026 / ExPEC</strain>
    </source>
</reference>
<accession>B7NGF6</accession>
<comment type="function">
    <text evidence="1">Has an important function as a repair enzyme for proteins that have been inactivated by oxidation. Catalyzes the reversible oxidation-reduction of methionine sulfoxide in proteins to methionine.</text>
</comment>
<comment type="catalytic activity">
    <reaction evidence="1">
        <text>L-methionyl-[protein] + [thioredoxin]-disulfide + H2O = L-methionyl-(S)-S-oxide-[protein] + [thioredoxin]-dithiol</text>
        <dbReference type="Rhea" id="RHEA:14217"/>
        <dbReference type="Rhea" id="RHEA-COMP:10698"/>
        <dbReference type="Rhea" id="RHEA-COMP:10700"/>
        <dbReference type="Rhea" id="RHEA-COMP:12313"/>
        <dbReference type="Rhea" id="RHEA-COMP:12315"/>
        <dbReference type="ChEBI" id="CHEBI:15377"/>
        <dbReference type="ChEBI" id="CHEBI:16044"/>
        <dbReference type="ChEBI" id="CHEBI:29950"/>
        <dbReference type="ChEBI" id="CHEBI:44120"/>
        <dbReference type="ChEBI" id="CHEBI:50058"/>
        <dbReference type="EC" id="1.8.4.11"/>
    </reaction>
</comment>
<comment type="catalytic activity">
    <reaction evidence="1">
        <text>[thioredoxin]-disulfide + L-methionine + H2O = L-methionine (S)-S-oxide + [thioredoxin]-dithiol</text>
        <dbReference type="Rhea" id="RHEA:19993"/>
        <dbReference type="Rhea" id="RHEA-COMP:10698"/>
        <dbReference type="Rhea" id="RHEA-COMP:10700"/>
        <dbReference type="ChEBI" id="CHEBI:15377"/>
        <dbReference type="ChEBI" id="CHEBI:29950"/>
        <dbReference type="ChEBI" id="CHEBI:50058"/>
        <dbReference type="ChEBI" id="CHEBI:57844"/>
        <dbReference type="ChEBI" id="CHEBI:58772"/>
        <dbReference type="EC" id="1.8.4.11"/>
    </reaction>
</comment>
<comment type="similarity">
    <text evidence="1">Belongs to the MsrA Met sulfoxide reductase family.</text>
</comment>
<feature type="chain" id="PRO_1000145404" description="Peptide methionine sulfoxide reductase MsrA">
    <location>
        <begin position="1"/>
        <end position="212"/>
    </location>
</feature>
<feature type="active site" evidence="1">
    <location>
        <position position="52"/>
    </location>
</feature>
<proteinExistence type="inferred from homology"/>